<sequence length="190" mass="21720">MKYKEPFGVKLDFETGIIENAKKSVRRLSDMKGYFIDEEAWKKMVEEGDPVVYEVYAIEQEEKEGDLNFATTVLYPGKVGNEFFMTKGHYHSKIDRAEVYFALKGKGGMLLQTPEGEARFIEMEPGTIVYVPPYWAHRTINTGDKPFIFLALYPADAGHDYGTIAEKGFSKIVVEENGKVVVKDNPKWRM</sequence>
<comment type="catalytic activity">
    <reaction evidence="2">
        <text>alpha-D-glucose 6-phosphate = beta-D-fructose 6-phosphate</text>
        <dbReference type="Rhea" id="RHEA:11816"/>
        <dbReference type="ChEBI" id="CHEBI:57634"/>
        <dbReference type="ChEBI" id="CHEBI:58225"/>
        <dbReference type="EC" id="5.3.1.9"/>
    </reaction>
</comment>
<comment type="cofactor">
    <cofactor evidence="2 3">
        <name>Fe cation</name>
        <dbReference type="ChEBI" id="CHEBI:24875"/>
    </cofactor>
    <text evidence="2 3">Binds 1 Fe cation per subunit.</text>
</comment>
<comment type="activity regulation">
    <text evidence="2">Inhibited by mannose 6-phosphate, fructose 1-phosphate and fructose 1,6-bisphosphate. Its activity is also inhibited by Cobalt (II) ions &lt; EDTA &lt; nickel (II) ions &lt; zinc (II) ions &lt;&lt; cadmium (II) ions &lt; copper (II) ions. Sodium and potassium ions and manganese ions show little or no effect on activity.</text>
</comment>
<comment type="pathway">
    <text>Carbohydrate degradation; glycolysis; D-glyceraldehyde 3-phosphate and glycerone phosphate from D-glucose: step 2/4.</text>
</comment>
<comment type="subunit">
    <text evidence="2 3">Homodimer.</text>
</comment>
<comment type="subcellular location">
    <subcellularLocation>
        <location evidence="1">Cytoplasm</location>
    </subcellularLocation>
</comment>
<comment type="similarity">
    <text evidence="4">Belongs to the archaeal-type GPI family.</text>
</comment>
<feature type="chain" id="PRO_0000185360" description="Glucose-6-phosphate isomerase">
    <location>
        <begin position="1"/>
        <end position="190"/>
    </location>
</feature>
<feature type="binding site">
    <location>
        <position position="89"/>
    </location>
    <ligand>
        <name>Fe cation</name>
        <dbReference type="ChEBI" id="CHEBI:24875"/>
    </ligand>
</feature>
<feature type="binding site">
    <location>
        <position position="91"/>
    </location>
    <ligand>
        <name>Fe cation</name>
        <dbReference type="ChEBI" id="CHEBI:24875"/>
    </ligand>
</feature>
<feature type="binding site">
    <location>
        <position position="98"/>
    </location>
    <ligand>
        <name>Fe cation</name>
        <dbReference type="ChEBI" id="CHEBI:24875"/>
    </ligand>
</feature>
<feature type="binding site">
    <location>
        <position position="137"/>
    </location>
    <ligand>
        <name>Fe cation</name>
        <dbReference type="ChEBI" id="CHEBI:24875"/>
    </ligand>
</feature>
<feature type="mutagenesis site" description="Loss of catalytic activity." evidence="2">
    <original>H</original>
    <variation>A</variation>
    <location>
        <position position="89"/>
    </location>
</feature>
<feature type="mutagenesis site" description="Loss of catalytic activity." evidence="2">
    <original>H</original>
    <variation>A</variation>
    <location>
        <position position="91"/>
    </location>
</feature>
<feature type="mutagenesis site" description="Loss of catalytic activity." evidence="2">
    <original>E</original>
    <variation>V</variation>
    <location>
        <position position="98"/>
    </location>
</feature>
<feature type="mutagenesis site" description="Loss of catalytic activity." evidence="2">
    <original>H</original>
    <variation>A</variation>
    <location>
        <position position="137"/>
    </location>
</feature>
<feature type="strand" evidence="5">
    <location>
        <begin position="7"/>
        <end position="11"/>
    </location>
</feature>
<feature type="turn" evidence="5">
    <location>
        <begin position="13"/>
        <end position="15"/>
    </location>
</feature>
<feature type="strand" evidence="5">
    <location>
        <begin position="22"/>
        <end position="27"/>
    </location>
</feature>
<feature type="helix" evidence="5">
    <location>
        <begin position="28"/>
        <end position="30"/>
    </location>
</feature>
<feature type="turn" evidence="5">
    <location>
        <begin position="32"/>
        <end position="34"/>
    </location>
</feature>
<feature type="helix" evidence="5">
    <location>
        <begin position="38"/>
        <end position="47"/>
    </location>
</feature>
<feature type="strand" evidence="5">
    <location>
        <begin position="51"/>
        <end position="58"/>
    </location>
</feature>
<feature type="strand" evidence="5">
    <location>
        <begin position="67"/>
        <end position="74"/>
    </location>
</feature>
<feature type="strand" evidence="5">
    <location>
        <begin position="98"/>
        <end position="105"/>
    </location>
</feature>
<feature type="strand" evidence="5">
    <location>
        <begin position="107"/>
        <end position="112"/>
    </location>
</feature>
<feature type="strand" evidence="5">
    <location>
        <begin position="118"/>
        <end position="123"/>
    </location>
</feature>
<feature type="strand" evidence="5">
    <location>
        <begin position="127"/>
        <end position="131"/>
    </location>
</feature>
<feature type="strand" evidence="5">
    <location>
        <begin position="136"/>
        <end position="141"/>
    </location>
</feature>
<feature type="strand" evidence="5">
    <location>
        <begin position="143"/>
        <end position="145"/>
    </location>
</feature>
<feature type="strand" evidence="5">
    <location>
        <begin position="147"/>
        <end position="154"/>
    </location>
</feature>
<feature type="helix" evidence="5">
    <location>
        <begin position="162"/>
        <end position="167"/>
    </location>
</feature>
<feature type="strand" evidence="5">
    <location>
        <begin position="170"/>
        <end position="183"/>
    </location>
</feature>
<reference key="1">
    <citation type="journal article" date="2003" name="FEBS Lett.">
        <title>Characterization of the cupin-type phosphoglucose isomerase from the hyperthermophilic archaeon Thermococcus litoralis.</title>
        <authorList>
            <person name="Jeong J.-J."/>
            <person name="Fushinobu S."/>
            <person name="Ito S."/>
            <person name="Jeon B.S."/>
            <person name="Shoun H."/>
            <person name="Wakagi T."/>
        </authorList>
    </citation>
    <scope>NUCLEOTIDE SEQUENCE [GENOMIC DNA]</scope>
    <scope>CATALYTIC ACTIVITY</scope>
    <scope>COFACTOR</scope>
    <scope>ACTIVITY REGULATION</scope>
    <scope>SUBUNIT</scope>
    <scope>MUTAGENESIS OF HIS-89; HIS-91; GLU-98 AND HIS-137</scope>
</reference>
<reference key="2">
    <citation type="submission" date="2004-02" db="PDB data bank">
        <title>Crystal structure of Thermococcus litoralis phosphoglucose isomerase.</title>
        <authorList>
            <person name="Jeong J.-J."/>
            <person name="Fushinobu S."/>
            <person name="Hidaka M."/>
            <person name="Shoun H."/>
            <person name="Wakagi T."/>
        </authorList>
    </citation>
    <scope>X-RAY CRYSTALLOGRAPHY (1.85 ANGSTROMS)</scope>
    <scope>COFACTOR</scope>
    <scope>SUBUNIT</scope>
</reference>
<organism>
    <name type="scientific">Thermococcus litoralis</name>
    <dbReference type="NCBI Taxonomy" id="2265"/>
    <lineage>
        <taxon>Archaea</taxon>
        <taxon>Methanobacteriati</taxon>
        <taxon>Methanobacteriota</taxon>
        <taxon>Thermococci</taxon>
        <taxon>Thermococcales</taxon>
        <taxon>Thermococcaceae</taxon>
        <taxon>Thermococcus</taxon>
    </lineage>
</organism>
<accession>P84140</accession>
<dbReference type="EC" id="5.3.1.9"/>
<dbReference type="EMBL" id="AB081724">
    <property type="status" value="NOT_ANNOTATED_CDS"/>
    <property type="molecule type" value="Genomic_DNA"/>
</dbReference>
<dbReference type="RefSeq" id="WP_004067944.1">
    <property type="nucleotide sequence ID" value="NC_022084.1"/>
</dbReference>
<dbReference type="PDB" id="1J3P">
    <property type="method" value="X-ray"/>
    <property type="resolution" value="2.02 A"/>
    <property type="chains" value="A/B=1-190"/>
</dbReference>
<dbReference type="PDB" id="1J3Q">
    <property type="method" value="X-ray"/>
    <property type="resolution" value="1.85 A"/>
    <property type="chains" value="A/B=1-190"/>
</dbReference>
<dbReference type="PDB" id="1J3R">
    <property type="method" value="X-ray"/>
    <property type="resolution" value="2.18 A"/>
    <property type="chains" value="A/B=1-190"/>
</dbReference>
<dbReference type="PDBsum" id="1J3P"/>
<dbReference type="PDBsum" id="1J3Q"/>
<dbReference type="PDBsum" id="1J3R"/>
<dbReference type="SMR" id="P84140"/>
<dbReference type="GeneID" id="16550542"/>
<dbReference type="OMA" id="WAHRTVN"/>
<dbReference type="BRENDA" id="5.3.1.9">
    <property type="organism ID" value="6302"/>
</dbReference>
<dbReference type="SABIO-RK" id="P84140"/>
<dbReference type="UniPathway" id="UPA00109">
    <property type="reaction ID" value="UER00181"/>
</dbReference>
<dbReference type="EvolutionaryTrace" id="P84140"/>
<dbReference type="GO" id="GO:0005737">
    <property type="term" value="C:cytoplasm"/>
    <property type="evidence" value="ECO:0007669"/>
    <property type="project" value="UniProtKB-SubCell"/>
</dbReference>
<dbReference type="GO" id="GO:0004347">
    <property type="term" value="F:glucose-6-phosphate isomerase activity"/>
    <property type="evidence" value="ECO:0000314"/>
    <property type="project" value="UniProtKB"/>
</dbReference>
<dbReference type="GO" id="GO:0005506">
    <property type="term" value="F:iron ion binding"/>
    <property type="evidence" value="ECO:0000314"/>
    <property type="project" value="UniProtKB"/>
</dbReference>
<dbReference type="GO" id="GO:0006094">
    <property type="term" value="P:gluconeogenesis"/>
    <property type="evidence" value="ECO:0000304"/>
    <property type="project" value="UniProtKB"/>
</dbReference>
<dbReference type="GO" id="GO:0006096">
    <property type="term" value="P:glycolytic process"/>
    <property type="evidence" value="ECO:0000304"/>
    <property type="project" value="UniProtKB"/>
</dbReference>
<dbReference type="CDD" id="cd02218">
    <property type="entry name" value="cupin_PGI"/>
    <property type="match status" value="1"/>
</dbReference>
<dbReference type="FunFam" id="2.60.120.10:FF:000391">
    <property type="entry name" value="Glucose-6-phosphate isomerase"/>
    <property type="match status" value="1"/>
</dbReference>
<dbReference type="Gene3D" id="2.60.120.10">
    <property type="entry name" value="Jelly Rolls"/>
    <property type="match status" value="1"/>
</dbReference>
<dbReference type="HAMAP" id="MF_01410">
    <property type="entry name" value="G6P_isomerase_arch"/>
    <property type="match status" value="1"/>
</dbReference>
<dbReference type="InterPro" id="IPR016758">
    <property type="entry name" value="G6P_isomerase_archaea/bacteria"/>
</dbReference>
<dbReference type="InterPro" id="IPR010551">
    <property type="entry name" value="G6P_isomerase_prok"/>
</dbReference>
<dbReference type="InterPro" id="IPR051610">
    <property type="entry name" value="GPI/OXD"/>
</dbReference>
<dbReference type="InterPro" id="IPR014710">
    <property type="entry name" value="RmlC-like_jellyroll"/>
</dbReference>
<dbReference type="InterPro" id="IPR011051">
    <property type="entry name" value="RmlC_Cupin_sf"/>
</dbReference>
<dbReference type="PANTHER" id="PTHR35848:SF6">
    <property type="entry name" value="CUPIN TYPE-2 DOMAIN-CONTAINING PROTEIN"/>
    <property type="match status" value="1"/>
</dbReference>
<dbReference type="PANTHER" id="PTHR35848">
    <property type="entry name" value="OXALATE-BINDING PROTEIN"/>
    <property type="match status" value="1"/>
</dbReference>
<dbReference type="Pfam" id="PF06560">
    <property type="entry name" value="GPI"/>
    <property type="match status" value="1"/>
</dbReference>
<dbReference type="PIRSF" id="PIRSF019325">
    <property type="entry name" value="Glucose-6-phosphate_isomerase"/>
    <property type="match status" value="1"/>
</dbReference>
<dbReference type="SUPFAM" id="SSF51182">
    <property type="entry name" value="RmlC-like cupins"/>
    <property type="match status" value="1"/>
</dbReference>
<keyword id="KW-0002">3D-structure</keyword>
<keyword id="KW-0963">Cytoplasm</keyword>
<keyword id="KW-0312">Gluconeogenesis</keyword>
<keyword id="KW-0324">Glycolysis</keyword>
<keyword id="KW-0408">Iron</keyword>
<keyword id="KW-0413">Isomerase</keyword>
<keyword id="KW-0479">Metal-binding</keyword>
<protein>
    <recommendedName>
        <fullName>Glucose-6-phosphate isomerase</fullName>
        <shortName>GPI</shortName>
        <ecNumber>5.3.1.9</ecNumber>
    </recommendedName>
    <alternativeName>
        <fullName>Phosphoglucose isomerase</fullName>
        <shortName>PGI</shortName>
    </alternativeName>
    <alternativeName>
        <fullName>Phosphohexose isomerase</fullName>
        <shortName>PHI</shortName>
    </alternativeName>
</protein>
<proteinExistence type="evidence at protein level"/>
<gene>
    <name type="primary">pgiA</name>
</gene>
<evidence type="ECO:0000250" key="1"/>
<evidence type="ECO:0000269" key="2">
    <source>
    </source>
</evidence>
<evidence type="ECO:0000269" key="3">
    <source ref="2"/>
</evidence>
<evidence type="ECO:0000305" key="4"/>
<evidence type="ECO:0007829" key="5">
    <source>
        <dbReference type="PDB" id="1J3Q"/>
    </source>
</evidence>
<name>G6PI_THELI</name>